<comment type="function">
    <text>Involved in oxygen transport from the lung to the various peripheral tissues.</text>
</comment>
<comment type="subunit">
    <text>Heterotetramer of two alpha chains and two beta chains.</text>
</comment>
<comment type="tissue specificity">
    <text>Red blood cells.</text>
</comment>
<comment type="similarity">
    <text evidence="1">Belongs to the globin family.</text>
</comment>
<dbReference type="PIR" id="A02319">
    <property type="entry name" value="HAAK"/>
</dbReference>
<dbReference type="SMR" id="P01998"/>
<dbReference type="GO" id="GO:0072562">
    <property type="term" value="C:blood microparticle"/>
    <property type="evidence" value="ECO:0007669"/>
    <property type="project" value="TreeGrafter"/>
</dbReference>
<dbReference type="GO" id="GO:0031838">
    <property type="term" value="C:haptoglobin-hemoglobin complex"/>
    <property type="evidence" value="ECO:0007669"/>
    <property type="project" value="TreeGrafter"/>
</dbReference>
<dbReference type="GO" id="GO:0005833">
    <property type="term" value="C:hemoglobin complex"/>
    <property type="evidence" value="ECO:0007669"/>
    <property type="project" value="InterPro"/>
</dbReference>
<dbReference type="GO" id="GO:0031720">
    <property type="term" value="F:haptoglobin binding"/>
    <property type="evidence" value="ECO:0007669"/>
    <property type="project" value="TreeGrafter"/>
</dbReference>
<dbReference type="GO" id="GO:0020037">
    <property type="term" value="F:heme binding"/>
    <property type="evidence" value="ECO:0007669"/>
    <property type="project" value="InterPro"/>
</dbReference>
<dbReference type="GO" id="GO:0005506">
    <property type="term" value="F:iron ion binding"/>
    <property type="evidence" value="ECO:0007669"/>
    <property type="project" value="InterPro"/>
</dbReference>
<dbReference type="GO" id="GO:0043177">
    <property type="term" value="F:organic acid binding"/>
    <property type="evidence" value="ECO:0007669"/>
    <property type="project" value="TreeGrafter"/>
</dbReference>
<dbReference type="GO" id="GO:0019825">
    <property type="term" value="F:oxygen binding"/>
    <property type="evidence" value="ECO:0007669"/>
    <property type="project" value="InterPro"/>
</dbReference>
<dbReference type="GO" id="GO:0005344">
    <property type="term" value="F:oxygen carrier activity"/>
    <property type="evidence" value="ECO:0007669"/>
    <property type="project" value="UniProtKB-KW"/>
</dbReference>
<dbReference type="GO" id="GO:0004601">
    <property type="term" value="F:peroxidase activity"/>
    <property type="evidence" value="ECO:0007669"/>
    <property type="project" value="TreeGrafter"/>
</dbReference>
<dbReference type="GO" id="GO:0042744">
    <property type="term" value="P:hydrogen peroxide catabolic process"/>
    <property type="evidence" value="ECO:0007669"/>
    <property type="project" value="TreeGrafter"/>
</dbReference>
<dbReference type="CDD" id="cd08927">
    <property type="entry name" value="Hb-alpha-like"/>
    <property type="match status" value="1"/>
</dbReference>
<dbReference type="FunFam" id="1.10.490.10:FF:000002">
    <property type="entry name" value="Hemoglobin subunit alpha"/>
    <property type="match status" value="1"/>
</dbReference>
<dbReference type="Gene3D" id="1.10.490.10">
    <property type="entry name" value="Globins"/>
    <property type="match status" value="1"/>
</dbReference>
<dbReference type="InterPro" id="IPR000971">
    <property type="entry name" value="Globin"/>
</dbReference>
<dbReference type="InterPro" id="IPR009050">
    <property type="entry name" value="Globin-like_sf"/>
</dbReference>
<dbReference type="InterPro" id="IPR012292">
    <property type="entry name" value="Globin/Proto"/>
</dbReference>
<dbReference type="InterPro" id="IPR002338">
    <property type="entry name" value="Hemoglobin_a-typ"/>
</dbReference>
<dbReference type="InterPro" id="IPR050056">
    <property type="entry name" value="Hemoglobin_oxygen_transport"/>
</dbReference>
<dbReference type="InterPro" id="IPR002339">
    <property type="entry name" value="Hemoglobin_pi"/>
</dbReference>
<dbReference type="PANTHER" id="PTHR11442">
    <property type="entry name" value="HEMOGLOBIN FAMILY MEMBER"/>
    <property type="match status" value="1"/>
</dbReference>
<dbReference type="PANTHER" id="PTHR11442:SF48">
    <property type="entry name" value="HEMOGLOBIN SUBUNIT ALPHA"/>
    <property type="match status" value="1"/>
</dbReference>
<dbReference type="Pfam" id="PF00042">
    <property type="entry name" value="Globin"/>
    <property type="match status" value="1"/>
</dbReference>
<dbReference type="PRINTS" id="PR00612">
    <property type="entry name" value="ALPHAHAEM"/>
</dbReference>
<dbReference type="PRINTS" id="PR00815">
    <property type="entry name" value="PIHAEM"/>
</dbReference>
<dbReference type="SUPFAM" id="SSF46458">
    <property type="entry name" value="Globin-like"/>
    <property type="match status" value="1"/>
</dbReference>
<dbReference type="PROSITE" id="PS01033">
    <property type="entry name" value="GLOBIN"/>
    <property type="match status" value="1"/>
</dbReference>
<sequence length="141" mass="15574">VLSSDDKCNVKAVWSKVAGHLEEYGAEALERMFCAYPQTKIYFPHFDLSHGSAQIRAHGKKVFAALHEAVNHIDDLPGALCRLSELHAHSLRVDPVNFKFLAQCVLVVVAIHHPGSLTPEVHASLDKFLCAVSSVLTSKYR</sequence>
<reference key="1">
    <citation type="journal article" date="1981" name="Hoppe-Seyler's Z. Physiol. Chem.">
        <title>Direct reciprocal allosteric interaction of oxygen and hydrogen carbonate sequence of the haemoglobins of the Caiman (Caiman crocodylus), the Nile crocodile (Crocodylus niloticus) and the Mississippi crocodile (Alligator mississippiensis).</title>
        <authorList>
            <person name="Leclercq F."/>
            <person name="Schnek A.G."/>
            <person name="Braunitzer G."/>
            <person name="Stangl A."/>
            <person name="Schrank B."/>
        </authorList>
    </citation>
    <scope>PROTEIN SEQUENCE</scope>
</reference>
<organism>
    <name type="scientific">Crocodylus niloticus</name>
    <name type="common">Nile crocodile</name>
    <name type="synonym">African crocodile</name>
    <dbReference type="NCBI Taxonomy" id="8501"/>
    <lineage>
        <taxon>Eukaryota</taxon>
        <taxon>Metazoa</taxon>
        <taxon>Chordata</taxon>
        <taxon>Craniata</taxon>
        <taxon>Vertebrata</taxon>
        <taxon>Euteleostomi</taxon>
        <taxon>Archelosauria</taxon>
        <taxon>Archosauria</taxon>
        <taxon>Crocodylia</taxon>
        <taxon>Longirostres</taxon>
        <taxon>Crocodylidae</taxon>
        <taxon>Crocodylus</taxon>
    </lineage>
</organism>
<accession>P01998</accession>
<protein>
    <recommendedName>
        <fullName>Hemoglobin subunit alpha</fullName>
    </recommendedName>
    <alternativeName>
        <fullName>Alpha-globin</fullName>
    </alternativeName>
    <alternativeName>
        <fullName>Hemoglobin alpha chain</fullName>
    </alternativeName>
</protein>
<keyword id="KW-0903">Direct protein sequencing</keyword>
<keyword id="KW-0349">Heme</keyword>
<keyword id="KW-0408">Iron</keyword>
<keyword id="KW-0479">Metal-binding</keyword>
<keyword id="KW-0561">Oxygen transport</keyword>
<keyword id="KW-0813">Transport</keyword>
<name>HBA_CRONI</name>
<evidence type="ECO:0000255" key="1">
    <source>
        <dbReference type="PROSITE-ProRule" id="PRU00238"/>
    </source>
</evidence>
<gene>
    <name type="primary">HBA</name>
</gene>
<proteinExistence type="evidence at protein level"/>
<feature type="chain" id="PRO_0000052610" description="Hemoglobin subunit alpha">
    <location>
        <begin position="1"/>
        <end position="141"/>
    </location>
</feature>
<feature type="domain" description="Globin" evidence="1">
    <location>
        <begin position="1"/>
        <end position="141"/>
    </location>
</feature>
<feature type="binding site" evidence="1">
    <location>
        <position position="58"/>
    </location>
    <ligand>
        <name>O2</name>
        <dbReference type="ChEBI" id="CHEBI:15379"/>
    </ligand>
</feature>
<feature type="binding site" description="proximal binding residue" evidence="1">
    <location>
        <position position="87"/>
    </location>
    <ligand>
        <name>heme b</name>
        <dbReference type="ChEBI" id="CHEBI:60344"/>
    </ligand>
    <ligandPart>
        <name>Fe</name>
        <dbReference type="ChEBI" id="CHEBI:18248"/>
    </ligandPart>
</feature>